<protein>
    <recommendedName>
        <fullName evidence="2">Small ribosomal subunit protein uS7cz/uS7cy</fullName>
    </recommendedName>
    <alternativeName>
        <fullName>30S ribosomal protein S7, chloroplastic</fullName>
    </alternativeName>
</protein>
<dbReference type="EMBL" id="EF489041">
    <property type="protein sequence ID" value="ABO36753.1"/>
    <property type="molecule type" value="Genomic_DNA"/>
</dbReference>
<dbReference type="EMBL" id="EF489041">
    <property type="protein sequence ID" value="ABO36774.1"/>
    <property type="molecule type" value="Genomic_DNA"/>
</dbReference>
<dbReference type="SMR" id="A4GYV8"/>
<dbReference type="FunCoup" id="A4GYV8">
    <property type="interactions" value="2346"/>
</dbReference>
<dbReference type="STRING" id="3694.A4GYV8"/>
<dbReference type="EnsemblPlants" id="Potri.013G138900.1.v4.1">
    <property type="protein sequence ID" value="Potri.013G138900.1.v4.1"/>
    <property type="gene ID" value="Potri.013G138900.v4.1"/>
</dbReference>
<dbReference type="Gramene" id="Potri.013G138900.1.v4.1">
    <property type="protein sequence ID" value="Potri.013G138900.1.v4.1"/>
    <property type="gene ID" value="Potri.013G138900.v4.1"/>
</dbReference>
<dbReference type="KEGG" id="pop:4929722"/>
<dbReference type="KEGG" id="pop:4929762"/>
<dbReference type="InParanoid" id="A4GYV8"/>
<dbReference type="OMA" id="DDTHRMA"/>
<dbReference type="OrthoDB" id="816221at2759"/>
<dbReference type="Proteomes" id="UP000006729">
    <property type="component" value="Chloroplast"/>
</dbReference>
<dbReference type="ExpressionAtlas" id="A4GYV8">
    <property type="expression patterns" value="baseline"/>
</dbReference>
<dbReference type="GO" id="GO:0009507">
    <property type="term" value="C:chloroplast"/>
    <property type="evidence" value="ECO:0007669"/>
    <property type="project" value="UniProtKB-SubCell"/>
</dbReference>
<dbReference type="GO" id="GO:0005840">
    <property type="term" value="C:ribosome"/>
    <property type="evidence" value="ECO:0000318"/>
    <property type="project" value="GO_Central"/>
</dbReference>
<dbReference type="GO" id="GO:0015935">
    <property type="term" value="C:small ribosomal subunit"/>
    <property type="evidence" value="ECO:0007669"/>
    <property type="project" value="InterPro"/>
</dbReference>
<dbReference type="GO" id="GO:0003729">
    <property type="term" value="F:mRNA binding"/>
    <property type="evidence" value="ECO:0000318"/>
    <property type="project" value="GO_Central"/>
</dbReference>
<dbReference type="GO" id="GO:0019843">
    <property type="term" value="F:rRNA binding"/>
    <property type="evidence" value="ECO:0000318"/>
    <property type="project" value="GO_Central"/>
</dbReference>
<dbReference type="GO" id="GO:0003735">
    <property type="term" value="F:structural constituent of ribosome"/>
    <property type="evidence" value="ECO:0000318"/>
    <property type="project" value="GO_Central"/>
</dbReference>
<dbReference type="GO" id="GO:0000028">
    <property type="term" value="P:ribosomal small subunit assembly"/>
    <property type="evidence" value="ECO:0000318"/>
    <property type="project" value="GO_Central"/>
</dbReference>
<dbReference type="GO" id="GO:0006412">
    <property type="term" value="P:translation"/>
    <property type="evidence" value="ECO:0000318"/>
    <property type="project" value="GO_Central"/>
</dbReference>
<dbReference type="CDD" id="cd14871">
    <property type="entry name" value="uS7_Chloroplast"/>
    <property type="match status" value="1"/>
</dbReference>
<dbReference type="FunFam" id="1.10.455.10:FF:000001">
    <property type="entry name" value="30S ribosomal protein S7"/>
    <property type="match status" value="1"/>
</dbReference>
<dbReference type="Gene3D" id="1.10.455.10">
    <property type="entry name" value="Ribosomal protein S7 domain"/>
    <property type="match status" value="1"/>
</dbReference>
<dbReference type="HAMAP" id="MF_00480_B">
    <property type="entry name" value="Ribosomal_uS7_B"/>
    <property type="match status" value="1"/>
</dbReference>
<dbReference type="InterPro" id="IPR000235">
    <property type="entry name" value="Ribosomal_uS7"/>
</dbReference>
<dbReference type="InterPro" id="IPR005717">
    <property type="entry name" value="Ribosomal_uS7_bac/org-type"/>
</dbReference>
<dbReference type="InterPro" id="IPR020606">
    <property type="entry name" value="Ribosomal_uS7_CS"/>
</dbReference>
<dbReference type="InterPro" id="IPR023798">
    <property type="entry name" value="Ribosomal_uS7_dom"/>
</dbReference>
<dbReference type="InterPro" id="IPR036823">
    <property type="entry name" value="Ribosomal_uS7_dom_sf"/>
</dbReference>
<dbReference type="NCBIfam" id="TIGR01029">
    <property type="entry name" value="rpsG_bact"/>
    <property type="match status" value="1"/>
</dbReference>
<dbReference type="PANTHER" id="PTHR11205">
    <property type="entry name" value="RIBOSOMAL PROTEIN S7"/>
    <property type="match status" value="1"/>
</dbReference>
<dbReference type="Pfam" id="PF00177">
    <property type="entry name" value="Ribosomal_S7"/>
    <property type="match status" value="1"/>
</dbReference>
<dbReference type="PIRSF" id="PIRSF002122">
    <property type="entry name" value="RPS7p_RPS7a_RPS5e_RPS7o"/>
    <property type="match status" value="1"/>
</dbReference>
<dbReference type="SUPFAM" id="SSF47973">
    <property type="entry name" value="Ribosomal protein S7"/>
    <property type="match status" value="1"/>
</dbReference>
<dbReference type="PROSITE" id="PS00052">
    <property type="entry name" value="RIBOSOMAL_S7"/>
    <property type="match status" value="1"/>
</dbReference>
<gene>
    <name type="primary">rps7-A</name>
    <name type="ordered locus">Poptr_cp070</name>
</gene>
<gene>
    <name type="primary">rps7-B</name>
    <name type="ordered locus">Poptr_cp093</name>
</gene>
<proteinExistence type="inferred from homology"/>
<keyword id="KW-0150">Chloroplast</keyword>
<keyword id="KW-0934">Plastid</keyword>
<keyword id="KW-1185">Reference proteome</keyword>
<keyword id="KW-0687">Ribonucleoprotein</keyword>
<keyword id="KW-0689">Ribosomal protein</keyword>
<keyword id="KW-0694">RNA-binding</keyword>
<keyword id="KW-0699">rRNA-binding</keyword>
<reference key="1">
    <citation type="journal article" date="2006" name="Science">
        <title>The genome of black cottonwood, Populus trichocarpa (Torr. &amp; Gray).</title>
        <authorList>
            <person name="Tuskan G.A."/>
            <person name="Difazio S."/>
            <person name="Jansson S."/>
            <person name="Bohlmann J."/>
            <person name="Grigoriev I."/>
            <person name="Hellsten U."/>
            <person name="Putnam N."/>
            <person name="Ralph S."/>
            <person name="Rombauts S."/>
            <person name="Salamov A."/>
            <person name="Schein J."/>
            <person name="Sterck L."/>
            <person name="Aerts A."/>
            <person name="Bhalerao R.R."/>
            <person name="Bhalerao R.P."/>
            <person name="Blaudez D."/>
            <person name="Boerjan W."/>
            <person name="Brun A."/>
            <person name="Brunner A."/>
            <person name="Busov V."/>
            <person name="Campbell M."/>
            <person name="Carlson J."/>
            <person name="Chalot M."/>
            <person name="Chapman J."/>
            <person name="Chen G.-L."/>
            <person name="Cooper D."/>
            <person name="Coutinho P.M."/>
            <person name="Couturier J."/>
            <person name="Covert S."/>
            <person name="Cronk Q."/>
            <person name="Cunningham R."/>
            <person name="Davis J."/>
            <person name="Degroeve S."/>
            <person name="Dejardin A."/>
            <person name="dePamphilis C.W."/>
            <person name="Detter J."/>
            <person name="Dirks B."/>
            <person name="Dubchak I."/>
            <person name="Duplessis S."/>
            <person name="Ehlting J."/>
            <person name="Ellis B."/>
            <person name="Gendler K."/>
            <person name="Goodstein D."/>
            <person name="Gribskov M."/>
            <person name="Grimwood J."/>
            <person name="Groover A."/>
            <person name="Gunter L."/>
            <person name="Hamberger B."/>
            <person name="Heinze B."/>
            <person name="Helariutta Y."/>
            <person name="Henrissat B."/>
            <person name="Holligan D."/>
            <person name="Holt R."/>
            <person name="Huang W."/>
            <person name="Islam-Faridi N."/>
            <person name="Jones S."/>
            <person name="Jones-Rhoades M."/>
            <person name="Jorgensen R."/>
            <person name="Joshi C."/>
            <person name="Kangasjaervi J."/>
            <person name="Karlsson J."/>
            <person name="Kelleher C."/>
            <person name="Kirkpatrick R."/>
            <person name="Kirst M."/>
            <person name="Kohler A."/>
            <person name="Kalluri U."/>
            <person name="Larimer F."/>
            <person name="Leebens-Mack J."/>
            <person name="Leple J.-C."/>
            <person name="Locascio P."/>
            <person name="Lou Y."/>
            <person name="Lucas S."/>
            <person name="Martin F."/>
            <person name="Montanini B."/>
            <person name="Napoli C."/>
            <person name="Nelson D.R."/>
            <person name="Nelson C."/>
            <person name="Nieminen K."/>
            <person name="Nilsson O."/>
            <person name="Pereda V."/>
            <person name="Peter G."/>
            <person name="Philippe R."/>
            <person name="Pilate G."/>
            <person name="Poliakov A."/>
            <person name="Razumovskaya J."/>
            <person name="Richardson P."/>
            <person name="Rinaldi C."/>
            <person name="Ritland K."/>
            <person name="Rouze P."/>
            <person name="Ryaboy D."/>
            <person name="Schmutz J."/>
            <person name="Schrader J."/>
            <person name="Segerman B."/>
            <person name="Shin H."/>
            <person name="Siddiqui A."/>
            <person name="Sterky F."/>
            <person name="Terry A."/>
            <person name="Tsai C.-J."/>
            <person name="Uberbacher E."/>
            <person name="Unneberg P."/>
            <person name="Vahala J."/>
            <person name="Wall K."/>
            <person name="Wessler S."/>
            <person name="Yang G."/>
            <person name="Yin T."/>
            <person name="Douglas C."/>
            <person name="Marra M."/>
            <person name="Sandberg G."/>
            <person name="Van de Peer Y."/>
            <person name="Rokhsar D.S."/>
        </authorList>
    </citation>
    <scope>NUCLEOTIDE SEQUENCE [LARGE SCALE GENOMIC DNA]</scope>
    <source>
        <strain>cv. Nisqually</strain>
    </source>
</reference>
<feature type="chain" id="PRO_0000344358" description="Small ribosomal subunit protein uS7cz/uS7cy">
    <location>
        <begin position="1"/>
        <end position="155"/>
    </location>
</feature>
<sequence>MSRRGTAEEKTAKSDPIYRNRLVNMLVNRILKHGKKSLAYQILYRAMKKIQQKTETNPLSVLHQAIRGVTPDIAVKARRVGGSTHQVPIEIGSTQGKALAIRWLLGASRKRPGRNMVFKLSSELVDAAKGSGDAIRKKEETHRMAEANRAFAHFR</sequence>
<geneLocation type="chloroplast"/>
<name>RR7_POPTR</name>
<comment type="function">
    <text evidence="1">One of the primary rRNA binding proteins, it binds directly to 16S rRNA where it nucleates assembly of the head domain of the 30S subunit.</text>
</comment>
<comment type="subunit">
    <text evidence="1">Part of the 30S ribosomal subunit.</text>
</comment>
<comment type="subcellular location">
    <subcellularLocation>
        <location>Plastid</location>
        <location>Chloroplast</location>
    </subcellularLocation>
</comment>
<comment type="similarity">
    <text evidence="3">Belongs to the universal ribosomal protein uS7 family.</text>
</comment>
<accession>A4GYV8</accession>
<organism>
    <name type="scientific">Populus trichocarpa</name>
    <name type="common">Western balsam poplar</name>
    <name type="synonym">Populus balsamifera subsp. trichocarpa</name>
    <dbReference type="NCBI Taxonomy" id="3694"/>
    <lineage>
        <taxon>Eukaryota</taxon>
        <taxon>Viridiplantae</taxon>
        <taxon>Streptophyta</taxon>
        <taxon>Embryophyta</taxon>
        <taxon>Tracheophyta</taxon>
        <taxon>Spermatophyta</taxon>
        <taxon>Magnoliopsida</taxon>
        <taxon>eudicotyledons</taxon>
        <taxon>Gunneridae</taxon>
        <taxon>Pentapetalae</taxon>
        <taxon>rosids</taxon>
        <taxon>fabids</taxon>
        <taxon>Malpighiales</taxon>
        <taxon>Salicaceae</taxon>
        <taxon>Saliceae</taxon>
        <taxon>Populus</taxon>
    </lineage>
</organism>
<evidence type="ECO:0000250" key="1"/>
<evidence type="ECO:0000255" key="2">
    <source>
        <dbReference type="HAMAP-Rule" id="MF_00480"/>
    </source>
</evidence>
<evidence type="ECO:0000305" key="3"/>